<name>Y278_TREPA</name>
<proteinExistence type="predicted"/>
<dbReference type="EMBL" id="AE000520">
    <property type="protein sequence ID" value="AAC65276.1"/>
    <property type="molecule type" value="Genomic_DNA"/>
</dbReference>
<dbReference type="PIR" id="A71343">
    <property type="entry name" value="A71343"/>
</dbReference>
<dbReference type="STRING" id="243276.TP_0278"/>
<dbReference type="EnsemblBacteria" id="AAC65276">
    <property type="protein sequence ID" value="AAC65276"/>
    <property type="gene ID" value="TP_0278"/>
</dbReference>
<dbReference type="KEGG" id="tpa:TP_0278"/>
<dbReference type="HOGENOM" id="CLU_3259312_0_0_12"/>
<dbReference type="Proteomes" id="UP000000811">
    <property type="component" value="Chromosome"/>
</dbReference>
<accession>O83302</accession>
<protein>
    <recommendedName>
        <fullName>Uncharacterized protein TP_0278</fullName>
    </recommendedName>
</protein>
<reference key="1">
    <citation type="journal article" date="1998" name="Science">
        <title>Complete genome sequence of Treponema pallidum, the syphilis spirochete.</title>
        <authorList>
            <person name="Fraser C.M."/>
            <person name="Norris S.J."/>
            <person name="Weinstock G.M."/>
            <person name="White O."/>
            <person name="Sutton G.G."/>
            <person name="Dodson R.J."/>
            <person name="Gwinn M.L."/>
            <person name="Hickey E.K."/>
            <person name="Clayton R.A."/>
            <person name="Ketchum K.A."/>
            <person name="Sodergren E."/>
            <person name="Hardham J.M."/>
            <person name="McLeod M.P."/>
            <person name="Salzberg S.L."/>
            <person name="Peterson J.D."/>
            <person name="Khalak H.G."/>
            <person name="Richardson D.L."/>
            <person name="Howell J.K."/>
            <person name="Chidambaram M."/>
            <person name="Utterback T.R."/>
            <person name="McDonald L.A."/>
            <person name="Artiach P."/>
            <person name="Bowman C."/>
            <person name="Cotton M.D."/>
            <person name="Fujii C."/>
            <person name="Garland S.A."/>
            <person name="Hatch B."/>
            <person name="Horst K."/>
            <person name="Roberts K.M."/>
            <person name="Sandusky M."/>
            <person name="Weidman J.F."/>
            <person name="Smith H.O."/>
            <person name="Venter J.C."/>
        </authorList>
    </citation>
    <scope>NUCLEOTIDE SEQUENCE [LARGE SCALE GENOMIC DNA]</scope>
    <source>
        <strain>Nichols</strain>
    </source>
</reference>
<keyword id="KW-1185">Reference proteome</keyword>
<gene>
    <name type="ordered locus">TP_0278</name>
</gene>
<organism>
    <name type="scientific">Treponema pallidum (strain Nichols)</name>
    <dbReference type="NCBI Taxonomy" id="243276"/>
    <lineage>
        <taxon>Bacteria</taxon>
        <taxon>Pseudomonadati</taxon>
        <taxon>Spirochaetota</taxon>
        <taxon>Spirochaetia</taxon>
        <taxon>Spirochaetales</taxon>
        <taxon>Treponemataceae</taxon>
        <taxon>Treponema</taxon>
    </lineage>
</organism>
<feature type="chain" id="PRO_0000202223" description="Uncharacterized protein TP_0278">
    <location>
        <begin position="1"/>
        <end position="42"/>
    </location>
</feature>
<sequence length="42" mass="4831">MRARLCQESALDSFLSMRLDGGGHWGRCRRAPDPLWEEQDIA</sequence>